<protein>
    <recommendedName>
        <fullName>Virion membrane protein OPG139</fullName>
    </recommendedName>
    <alternativeName>
        <fullName>Protein P8</fullName>
    </alternativeName>
</protein>
<organismHost>
    <name type="scientific">Homo sapiens</name>
    <name type="common">Human</name>
    <dbReference type="NCBI Taxonomy" id="9606"/>
</organismHost>
<reference key="1">
    <citation type="journal article" date="1990" name="Virology">
        <title>The complete DNA sequence of vaccinia virus.</title>
        <authorList>
            <person name="Goebel S.J."/>
            <person name="Johnson G.P."/>
            <person name="Perkus M.E."/>
            <person name="Davis S.W."/>
            <person name="Winslow J.P."/>
            <person name="Paoletti E."/>
        </authorList>
    </citation>
    <scope>NUCLEOTIDE SEQUENCE [LARGE SCALE GENOMIC DNA]</scope>
</reference>
<reference key="2">
    <citation type="journal article" date="1990" name="Virology">
        <title>Appendix to 'The complete DNA sequence of vaccinia virus'.</title>
        <authorList>
            <person name="Goebel S.J."/>
            <person name="Johnson G.P."/>
            <person name="Perkus M.E."/>
            <person name="Davis S.W."/>
            <person name="Winslow J.P."/>
            <person name="Paoletti E."/>
        </authorList>
    </citation>
    <scope>NUCLEOTIDE SEQUENCE [LARGE SCALE GENOMIC DNA]</scope>
</reference>
<feature type="chain" id="PRO_0000099239" description="Virion membrane protein OPG139">
    <location>
        <begin position="1"/>
        <end position="70"/>
    </location>
</feature>
<feature type="transmembrane region" description="Helical" evidence="3">
    <location>
        <begin position="1"/>
        <end position="21"/>
    </location>
</feature>
<feature type="topological domain" description="Virion surface" evidence="3">
    <location>
        <begin position="22"/>
        <end position="70"/>
    </location>
</feature>
<feature type="region of interest" description="Disordered" evidence="4">
    <location>
        <begin position="30"/>
        <end position="50"/>
    </location>
</feature>
<feature type="compositionally biased region" description="Pro residues" evidence="4">
    <location>
        <begin position="33"/>
        <end position="45"/>
    </location>
</feature>
<feature type="modified residue" description="Phosphoserine; by host" evidence="1">
    <location>
        <position position="40"/>
    </location>
</feature>
<accession>P20990</accession>
<proteinExistence type="evidence at transcript level"/>
<evidence type="ECO:0000250" key="1"/>
<evidence type="ECO:0000250" key="2">
    <source>
        <dbReference type="UniProtKB" id="Q76ZQ4"/>
    </source>
</evidence>
<evidence type="ECO:0000255" key="3"/>
<evidence type="ECO:0000256" key="4">
    <source>
        <dbReference type="SAM" id="MobiDB-lite"/>
    </source>
</evidence>
<evidence type="ECO:0000305" key="5"/>
<gene>
    <name type="primary">OPG139</name>
    <name type="ORF">A13L</name>
</gene>
<sequence length="70" mass="7696">MIGILLLIGICVAVTVAILYSMYNKIKNSQNPNPSPNLNSPPPEPKNTKFVNNLEKDHISSLYNLVKSSV</sequence>
<comment type="function">
    <text evidence="2">Essential for the encapsidation of DNA into immature virions (IV) and the subsequent maturation of IV into mature virions (MV).</text>
</comment>
<comment type="subcellular location">
    <subcellularLocation>
        <location evidence="2">Virion membrane</location>
        <topology evidence="2">Single-pass membrane protein</topology>
    </subcellularLocation>
    <text evidence="2">Component of the mature virion (MV) membrane. The mature virion is located in the cytoplasm of infected cells and is probably released by cell lysis.</text>
</comment>
<comment type="induction">
    <text>Expressed in the late phase of the viral replicative cycle.</text>
</comment>
<comment type="PTM">
    <text evidence="2">Phosphorylated by a OPG054-independent mechanism.</text>
</comment>
<comment type="similarity">
    <text evidence="5">Belongs to the orthopoxvirus OPG139 family.</text>
</comment>
<organism>
    <name type="scientific">Vaccinia virus (strain Copenhagen)</name>
    <name type="common">VACV</name>
    <dbReference type="NCBI Taxonomy" id="10249"/>
    <lineage>
        <taxon>Viruses</taxon>
        <taxon>Varidnaviria</taxon>
        <taxon>Bamfordvirae</taxon>
        <taxon>Nucleocytoviricota</taxon>
        <taxon>Pokkesviricetes</taxon>
        <taxon>Chitovirales</taxon>
        <taxon>Poxviridae</taxon>
        <taxon>Chordopoxvirinae</taxon>
        <taxon>Orthopoxvirus</taxon>
        <taxon>Vaccinia virus</taxon>
    </lineage>
</organism>
<name>PG139_VACCC</name>
<keyword id="KW-0426">Late protein</keyword>
<keyword id="KW-0472">Membrane</keyword>
<keyword id="KW-0597">Phosphoprotein</keyword>
<keyword id="KW-1185">Reference proteome</keyword>
<keyword id="KW-0812">Transmembrane</keyword>
<keyword id="KW-1133">Transmembrane helix</keyword>
<keyword id="KW-0946">Virion</keyword>
<dbReference type="EMBL" id="M35027">
    <property type="protein sequence ID" value="AAA48135.1"/>
    <property type="molecule type" value="Genomic_DNA"/>
</dbReference>
<dbReference type="PIR" id="F42518">
    <property type="entry name" value="F42518"/>
</dbReference>
<dbReference type="SMR" id="P20990"/>
<dbReference type="Proteomes" id="UP000008269">
    <property type="component" value="Segment"/>
</dbReference>
<dbReference type="GO" id="GO:0016020">
    <property type="term" value="C:membrane"/>
    <property type="evidence" value="ECO:0007669"/>
    <property type="project" value="UniProtKB-KW"/>
</dbReference>
<dbReference type="GO" id="GO:0055036">
    <property type="term" value="C:virion membrane"/>
    <property type="evidence" value="ECO:0007669"/>
    <property type="project" value="UniProtKB-SubCell"/>
</dbReference>
<dbReference type="InterPro" id="IPR009236">
    <property type="entry name" value="Chordopox_A13L"/>
</dbReference>
<dbReference type="Pfam" id="PF05961">
    <property type="entry name" value="Chordopox_A13L"/>
    <property type="match status" value="1"/>
</dbReference>